<reference key="1">
    <citation type="submission" date="2006-03" db="EMBL/GenBank/DDBJ databases">
        <title>Complete sequence of Rhodopseudomonas palustris BisB5.</title>
        <authorList>
            <consortium name="US DOE Joint Genome Institute"/>
            <person name="Copeland A."/>
            <person name="Lucas S."/>
            <person name="Lapidus A."/>
            <person name="Barry K."/>
            <person name="Detter J.C."/>
            <person name="Glavina del Rio T."/>
            <person name="Hammon N."/>
            <person name="Israni S."/>
            <person name="Dalin E."/>
            <person name="Tice H."/>
            <person name="Pitluck S."/>
            <person name="Chain P."/>
            <person name="Malfatti S."/>
            <person name="Shin M."/>
            <person name="Vergez L."/>
            <person name="Schmutz J."/>
            <person name="Larimer F."/>
            <person name="Land M."/>
            <person name="Hauser L."/>
            <person name="Pelletier D.A."/>
            <person name="Kyrpides N."/>
            <person name="Lykidis A."/>
            <person name="Oda Y."/>
            <person name="Harwood C.S."/>
            <person name="Richardson P."/>
        </authorList>
    </citation>
    <scope>NUCLEOTIDE SEQUENCE [LARGE SCALE GENOMIC DNA]</scope>
    <source>
        <strain>BisB5</strain>
    </source>
</reference>
<sequence length="202" mass="21604">MTLWLGPQPLVLASQSRARQALLTNAGIPFEAIPAKLDERGIARVSGLSAPGDIAALLAQEKAAFVSNHHPGRLVLGADQTLALGAREFNKPADRNEAAKQLRELAGRRHELHSAIAVVRNGITLFAEVVIARMTMRPLSDEEIAVYLDEVGDTATCSVGGYQVEGLGVHLFDGIHGDHSTILGLPLLPLLGFLRSQKLLTL</sequence>
<proteinExistence type="inferred from homology"/>
<dbReference type="EC" id="3.6.1.9" evidence="1"/>
<dbReference type="EMBL" id="CP000283">
    <property type="protein sequence ID" value="ABE37663.1"/>
    <property type="molecule type" value="Genomic_DNA"/>
</dbReference>
<dbReference type="SMR" id="Q13E26"/>
<dbReference type="STRING" id="316057.RPD_0425"/>
<dbReference type="KEGG" id="rpd:RPD_0425"/>
<dbReference type="eggNOG" id="COG0424">
    <property type="taxonomic scope" value="Bacteria"/>
</dbReference>
<dbReference type="HOGENOM" id="CLU_040416_1_1_5"/>
<dbReference type="BioCyc" id="RPAL316057:RPD_RS02185-MONOMER"/>
<dbReference type="Proteomes" id="UP000001818">
    <property type="component" value="Chromosome"/>
</dbReference>
<dbReference type="GO" id="GO:0005737">
    <property type="term" value="C:cytoplasm"/>
    <property type="evidence" value="ECO:0007669"/>
    <property type="project" value="UniProtKB-SubCell"/>
</dbReference>
<dbReference type="GO" id="GO:0047429">
    <property type="term" value="F:nucleoside triphosphate diphosphatase activity"/>
    <property type="evidence" value="ECO:0007669"/>
    <property type="project" value="UniProtKB-EC"/>
</dbReference>
<dbReference type="GO" id="GO:0009117">
    <property type="term" value="P:nucleotide metabolic process"/>
    <property type="evidence" value="ECO:0007669"/>
    <property type="project" value="UniProtKB-KW"/>
</dbReference>
<dbReference type="CDD" id="cd00555">
    <property type="entry name" value="Maf"/>
    <property type="match status" value="1"/>
</dbReference>
<dbReference type="Gene3D" id="3.90.950.10">
    <property type="match status" value="1"/>
</dbReference>
<dbReference type="HAMAP" id="MF_00528">
    <property type="entry name" value="Maf"/>
    <property type="match status" value="1"/>
</dbReference>
<dbReference type="InterPro" id="IPR029001">
    <property type="entry name" value="ITPase-like_fam"/>
</dbReference>
<dbReference type="InterPro" id="IPR003697">
    <property type="entry name" value="Maf-like"/>
</dbReference>
<dbReference type="PANTHER" id="PTHR43213">
    <property type="entry name" value="BIFUNCTIONAL DTTP/UTP PYROPHOSPHATASE/METHYLTRANSFERASE PROTEIN-RELATED"/>
    <property type="match status" value="1"/>
</dbReference>
<dbReference type="PANTHER" id="PTHR43213:SF5">
    <property type="entry name" value="BIFUNCTIONAL DTTP_UTP PYROPHOSPHATASE_METHYLTRANSFERASE PROTEIN-RELATED"/>
    <property type="match status" value="1"/>
</dbReference>
<dbReference type="Pfam" id="PF02545">
    <property type="entry name" value="Maf"/>
    <property type="match status" value="1"/>
</dbReference>
<dbReference type="PIRSF" id="PIRSF006305">
    <property type="entry name" value="Maf"/>
    <property type="match status" value="1"/>
</dbReference>
<dbReference type="SUPFAM" id="SSF52972">
    <property type="entry name" value="ITPase-like"/>
    <property type="match status" value="1"/>
</dbReference>
<name>NTPP_RHOPS</name>
<gene>
    <name type="ordered locus">RPD_0425</name>
</gene>
<protein>
    <recommendedName>
        <fullName evidence="1">Nucleoside triphosphate pyrophosphatase</fullName>
        <ecNumber evidence="1">3.6.1.9</ecNumber>
    </recommendedName>
    <alternativeName>
        <fullName evidence="1">Nucleotide pyrophosphatase</fullName>
        <shortName evidence="1">Nucleotide PPase</shortName>
    </alternativeName>
</protein>
<evidence type="ECO:0000255" key="1">
    <source>
        <dbReference type="HAMAP-Rule" id="MF_00528"/>
    </source>
</evidence>
<feature type="chain" id="PRO_0000267404" description="Nucleoside triphosphate pyrophosphatase">
    <location>
        <begin position="1"/>
        <end position="202"/>
    </location>
</feature>
<feature type="active site" description="Proton acceptor" evidence="1">
    <location>
        <position position="79"/>
    </location>
</feature>
<organism>
    <name type="scientific">Rhodopseudomonas palustris (strain BisB5)</name>
    <dbReference type="NCBI Taxonomy" id="316057"/>
    <lineage>
        <taxon>Bacteria</taxon>
        <taxon>Pseudomonadati</taxon>
        <taxon>Pseudomonadota</taxon>
        <taxon>Alphaproteobacteria</taxon>
        <taxon>Hyphomicrobiales</taxon>
        <taxon>Nitrobacteraceae</taxon>
        <taxon>Rhodopseudomonas</taxon>
    </lineage>
</organism>
<comment type="function">
    <text evidence="1">Nucleoside triphosphate pyrophosphatase. May have a dual role in cell division arrest and in preventing the incorporation of modified nucleotides into cellular nucleic acids.</text>
</comment>
<comment type="catalytic activity">
    <reaction evidence="1">
        <text>a ribonucleoside 5'-triphosphate + H2O = a ribonucleoside 5'-phosphate + diphosphate + H(+)</text>
        <dbReference type="Rhea" id="RHEA:23996"/>
        <dbReference type="ChEBI" id="CHEBI:15377"/>
        <dbReference type="ChEBI" id="CHEBI:15378"/>
        <dbReference type="ChEBI" id="CHEBI:33019"/>
        <dbReference type="ChEBI" id="CHEBI:58043"/>
        <dbReference type="ChEBI" id="CHEBI:61557"/>
        <dbReference type="EC" id="3.6.1.9"/>
    </reaction>
</comment>
<comment type="catalytic activity">
    <reaction evidence="1">
        <text>a 2'-deoxyribonucleoside 5'-triphosphate + H2O = a 2'-deoxyribonucleoside 5'-phosphate + diphosphate + H(+)</text>
        <dbReference type="Rhea" id="RHEA:44644"/>
        <dbReference type="ChEBI" id="CHEBI:15377"/>
        <dbReference type="ChEBI" id="CHEBI:15378"/>
        <dbReference type="ChEBI" id="CHEBI:33019"/>
        <dbReference type="ChEBI" id="CHEBI:61560"/>
        <dbReference type="ChEBI" id="CHEBI:65317"/>
        <dbReference type="EC" id="3.6.1.9"/>
    </reaction>
</comment>
<comment type="cofactor">
    <cofactor evidence="1">
        <name>a divalent metal cation</name>
        <dbReference type="ChEBI" id="CHEBI:60240"/>
    </cofactor>
</comment>
<comment type="subcellular location">
    <subcellularLocation>
        <location evidence="1">Cytoplasm</location>
    </subcellularLocation>
</comment>
<comment type="similarity">
    <text evidence="1">Belongs to the Maf family.</text>
</comment>
<keyword id="KW-0963">Cytoplasm</keyword>
<keyword id="KW-0378">Hydrolase</keyword>
<keyword id="KW-0546">Nucleotide metabolism</keyword>
<accession>Q13E26</accession>